<sequence length="535" mass="58548">MLSLLNPKAESIQRAQALQVNISAAIGLQDVLKSNLGPTGTTKMLVDGAGAIKLTKDGKVLLTEMQIQNPTASCIAKAATAQDDATGDGTTSVCLLVGELLKQAELYIREGLHPSLISDGFNLAKNEALTFLDSFKTDFEVDREVLLNVAKTSLSTKISSKVVESLAPAVVDAILTIRRPDEPIDLHMVEIMKMQNRSASDTQLIRGLLLDHGARHPDMPKQVKNAYILILNVSLEYEKSEINSGFFYSTSEQRERLVESERKFVDNKLRKIVELKKEVCERDPTANFVIINQKGIDPLSLDVLAKNGIMALRRAKRRNMERLQLACGGVAQNSVDDLNPEVLGWAGSVYERTLGEEKYTFVEDVKDPKSATILIHGPNTYTIQQIQDATRDGLRAVKNAVEDNCLIVGAGAFEVACAAHLRNKFAAKEVKGKAKMGVYAYADALLIIPKTLAANSSYDTQDAIVALQEEASEGYKVGLDLKTGMPFDPEVEGIYDNYRVIRHMLHSATVIASNLISVDQILRAGRSSLKEGPPQ</sequence>
<keyword id="KW-0067">ATP-binding</keyword>
<keyword id="KW-0143">Chaperone</keyword>
<keyword id="KW-0963">Cytoplasm</keyword>
<keyword id="KW-0547">Nucleotide-binding</keyword>
<keyword id="KW-1185">Reference proteome</keyword>
<organism>
    <name type="scientific">Schizosaccharomyces pombe (strain 972 / ATCC 24843)</name>
    <name type="common">Fission yeast</name>
    <dbReference type="NCBI Taxonomy" id="284812"/>
    <lineage>
        <taxon>Eukaryota</taxon>
        <taxon>Fungi</taxon>
        <taxon>Dikarya</taxon>
        <taxon>Ascomycota</taxon>
        <taxon>Taphrinomycotina</taxon>
        <taxon>Schizosaccharomycetes</taxon>
        <taxon>Schizosaccharomycetales</taxon>
        <taxon>Schizosaccharomycetaceae</taxon>
        <taxon>Schizosaccharomyces</taxon>
    </lineage>
</organism>
<feature type="chain" id="PRO_0000128361" description="T-complex protein 1 subunit zeta">
    <location>
        <begin position="1"/>
        <end position="535"/>
    </location>
</feature>
<reference key="1">
    <citation type="journal article" date="2002" name="Nature">
        <title>The genome sequence of Schizosaccharomyces pombe.</title>
        <authorList>
            <person name="Wood V."/>
            <person name="Gwilliam R."/>
            <person name="Rajandream M.A."/>
            <person name="Lyne M.H."/>
            <person name="Lyne R."/>
            <person name="Stewart A."/>
            <person name="Sgouros J.G."/>
            <person name="Peat N."/>
            <person name="Hayles J."/>
            <person name="Baker S.G."/>
            <person name="Basham D."/>
            <person name="Bowman S."/>
            <person name="Brooks K."/>
            <person name="Brown D."/>
            <person name="Brown S."/>
            <person name="Chillingworth T."/>
            <person name="Churcher C.M."/>
            <person name="Collins M."/>
            <person name="Connor R."/>
            <person name="Cronin A."/>
            <person name="Davis P."/>
            <person name="Feltwell T."/>
            <person name="Fraser A."/>
            <person name="Gentles S."/>
            <person name="Goble A."/>
            <person name="Hamlin N."/>
            <person name="Harris D.E."/>
            <person name="Hidalgo J."/>
            <person name="Hodgson G."/>
            <person name="Holroyd S."/>
            <person name="Hornsby T."/>
            <person name="Howarth S."/>
            <person name="Huckle E.J."/>
            <person name="Hunt S."/>
            <person name="Jagels K."/>
            <person name="James K.D."/>
            <person name="Jones L."/>
            <person name="Jones M."/>
            <person name="Leather S."/>
            <person name="McDonald S."/>
            <person name="McLean J."/>
            <person name="Mooney P."/>
            <person name="Moule S."/>
            <person name="Mungall K.L."/>
            <person name="Murphy L.D."/>
            <person name="Niblett D."/>
            <person name="Odell C."/>
            <person name="Oliver K."/>
            <person name="O'Neil S."/>
            <person name="Pearson D."/>
            <person name="Quail M.A."/>
            <person name="Rabbinowitsch E."/>
            <person name="Rutherford K.M."/>
            <person name="Rutter S."/>
            <person name="Saunders D."/>
            <person name="Seeger K."/>
            <person name="Sharp S."/>
            <person name="Skelton J."/>
            <person name="Simmonds M.N."/>
            <person name="Squares R."/>
            <person name="Squares S."/>
            <person name="Stevens K."/>
            <person name="Taylor K."/>
            <person name="Taylor R.G."/>
            <person name="Tivey A."/>
            <person name="Walsh S.V."/>
            <person name="Warren T."/>
            <person name="Whitehead S."/>
            <person name="Woodward J.R."/>
            <person name="Volckaert G."/>
            <person name="Aert R."/>
            <person name="Robben J."/>
            <person name="Grymonprez B."/>
            <person name="Weltjens I."/>
            <person name="Vanstreels E."/>
            <person name="Rieger M."/>
            <person name="Schaefer M."/>
            <person name="Mueller-Auer S."/>
            <person name="Gabel C."/>
            <person name="Fuchs M."/>
            <person name="Duesterhoeft A."/>
            <person name="Fritzc C."/>
            <person name="Holzer E."/>
            <person name="Moestl D."/>
            <person name="Hilbert H."/>
            <person name="Borzym K."/>
            <person name="Langer I."/>
            <person name="Beck A."/>
            <person name="Lehrach H."/>
            <person name="Reinhardt R."/>
            <person name="Pohl T.M."/>
            <person name="Eger P."/>
            <person name="Zimmermann W."/>
            <person name="Wedler H."/>
            <person name="Wambutt R."/>
            <person name="Purnelle B."/>
            <person name="Goffeau A."/>
            <person name="Cadieu E."/>
            <person name="Dreano S."/>
            <person name="Gloux S."/>
            <person name="Lelaure V."/>
            <person name="Mottier S."/>
            <person name="Galibert F."/>
            <person name="Aves S.J."/>
            <person name="Xiang Z."/>
            <person name="Hunt C."/>
            <person name="Moore K."/>
            <person name="Hurst S.M."/>
            <person name="Lucas M."/>
            <person name="Rochet M."/>
            <person name="Gaillardin C."/>
            <person name="Tallada V.A."/>
            <person name="Garzon A."/>
            <person name="Thode G."/>
            <person name="Daga R.R."/>
            <person name="Cruzado L."/>
            <person name="Jimenez J."/>
            <person name="Sanchez M."/>
            <person name="del Rey F."/>
            <person name="Benito J."/>
            <person name="Dominguez A."/>
            <person name="Revuelta J.L."/>
            <person name="Moreno S."/>
            <person name="Armstrong J."/>
            <person name="Forsburg S.L."/>
            <person name="Cerutti L."/>
            <person name="Lowe T."/>
            <person name="McCombie W.R."/>
            <person name="Paulsen I."/>
            <person name="Potashkin J."/>
            <person name="Shpakovski G.V."/>
            <person name="Ussery D."/>
            <person name="Barrell B.G."/>
            <person name="Nurse P."/>
        </authorList>
    </citation>
    <scope>NUCLEOTIDE SEQUENCE [LARGE SCALE GENOMIC DNA]</scope>
    <source>
        <strain>972 / ATCC 24843</strain>
    </source>
</reference>
<dbReference type="EMBL" id="CU329671">
    <property type="protein sequence ID" value="CAA22815.1"/>
    <property type="molecule type" value="Genomic_DNA"/>
</dbReference>
<dbReference type="PIR" id="T40587">
    <property type="entry name" value="T40587"/>
</dbReference>
<dbReference type="RefSeq" id="NP_595369.1">
    <property type="nucleotide sequence ID" value="NM_001021277.2"/>
</dbReference>
<dbReference type="SMR" id="O94515"/>
<dbReference type="BioGRID" id="277643">
    <property type="interactions" value="6"/>
</dbReference>
<dbReference type="FunCoup" id="O94515">
    <property type="interactions" value="525"/>
</dbReference>
<dbReference type="IntAct" id="O94515">
    <property type="interactions" value="1"/>
</dbReference>
<dbReference type="STRING" id="284812.O94515"/>
<dbReference type="iPTMnet" id="O94515"/>
<dbReference type="PaxDb" id="4896-SPBC646.11.1"/>
<dbReference type="EnsemblFungi" id="SPBC646.11.1">
    <property type="protein sequence ID" value="SPBC646.11.1:pep"/>
    <property type="gene ID" value="SPBC646.11"/>
</dbReference>
<dbReference type="GeneID" id="2541128"/>
<dbReference type="KEGG" id="spo:2541128"/>
<dbReference type="PomBase" id="SPBC646.11">
    <property type="gene designation" value="cct6"/>
</dbReference>
<dbReference type="VEuPathDB" id="FungiDB:SPBC646.11"/>
<dbReference type="eggNOG" id="KOG0359">
    <property type="taxonomic scope" value="Eukaryota"/>
</dbReference>
<dbReference type="HOGENOM" id="CLU_008891_3_1_1"/>
<dbReference type="InParanoid" id="O94515"/>
<dbReference type="OMA" id="LHPRIMT"/>
<dbReference type="PhylomeDB" id="O94515"/>
<dbReference type="Reactome" id="R-SPO-390471">
    <property type="pathway name" value="Association of TriC/CCT with target proteins during biosynthesis"/>
</dbReference>
<dbReference type="Reactome" id="R-SPO-6814122">
    <property type="pathway name" value="Cooperation of PDCL (PhLP1) and TRiC/CCT in G-protein beta folding"/>
</dbReference>
<dbReference type="PRO" id="PR:O94515"/>
<dbReference type="Proteomes" id="UP000002485">
    <property type="component" value="Chromosome II"/>
</dbReference>
<dbReference type="GO" id="GO:0005832">
    <property type="term" value="C:chaperonin-containing T-complex"/>
    <property type="evidence" value="ECO:0000314"/>
    <property type="project" value="PomBase"/>
</dbReference>
<dbReference type="GO" id="GO:0005856">
    <property type="term" value="C:cytoskeleton"/>
    <property type="evidence" value="ECO:0000266"/>
    <property type="project" value="PomBase"/>
</dbReference>
<dbReference type="GO" id="GO:0005829">
    <property type="term" value="C:cytosol"/>
    <property type="evidence" value="ECO:0007005"/>
    <property type="project" value="PomBase"/>
</dbReference>
<dbReference type="GO" id="GO:0005634">
    <property type="term" value="C:nucleus"/>
    <property type="evidence" value="ECO:0007005"/>
    <property type="project" value="PomBase"/>
</dbReference>
<dbReference type="GO" id="GO:0005524">
    <property type="term" value="F:ATP binding"/>
    <property type="evidence" value="ECO:0007669"/>
    <property type="project" value="UniProtKB-KW"/>
</dbReference>
<dbReference type="GO" id="GO:0016887">
    <property type="term" value="F:ATP hydrolysis activity"/>
    <property type="evidence" value="ECO:0007669"/>
    <property type="project" value="InterPro"/>
</dbReference>
<dbReference type="GO" id="GO:0140662">
    <property type="term" value="F:ATP-dependent protein folding chaperone"/>
    <property type="evidence" value="ECO:0007669"/>
    <property type="project" value="InterPro"/>
</dbReference>
<dbReference type="GO" id="GO:0051082">
    <property type="term" value="F:unfolded protein binding"/>
    <property type="evidence" value="ECO:0000318"/>
    <property type="project" value="GO_Central"/>
</dbReference>
<dbReference type="GO" id="GO:0006457">
    <property type="term" value="P:protein folding"/>
    <property type="evidence" value="ECO:0000318"/>
    <property type="project" value="GO_Central"/>
</dbReference>
<dbReference type="CDD" id="cd03342">
    <property type="entry name" value="TCP1_zeta"/>
    <property type="match status" value="1"/>
</dbReference>
<dbReference type="FunFam" id="1.10.560.10:FF:000058">
    <property type="entry name" value="T-complex protein 1 subunit zeta"/>
    <property type="match status" value="1"/>
</dbReference>
<dbReference type="FunFam" id="3.50.7.10:FF:000004">
    <property type="entry name" value="T-complex protein 1 subunit zeta"/>
    <property type="match status" value="1"/>
</dbReference>
<dbReference type="Gene3D" id="3.50.7.10">
    <property type="entry name" value="GroEL"/>
    <property type="match status" value="1"/>
</dbReference>
<dbReference type="Gene3D" id="1.10.560.10">
    <property type="entry name" value="GroEL-like equatorial domain"/>
    <property type="match status" value="1"/>
</dbReference>
<dbReference type="Gene3D" id="3.30.260.10">
    <property type="entry name" value="TCP-1-like chaperonin intermediate domain"/>
    <property type="match status" value="1"/>
</dbReference>
<dbReference type="InterPro" id="IPR012722">
    <property type="entry name" value="Chap_CCT_zeta"/>
</dbReference>
<dbReference type="InterPro" id="IPR017998">
    <property type="entry name" value="Chaperone_TCP-1"/>
</dbReference>
<dbReference type="InterPro" id="IPR002194">
    <property type="entry name" value="Chaperonin_TCP-1_CS"/>
</dbReference>
<dbReference type="InterPro" id="IPR002423">
    <property type="entry name" value="Cpn60/GroEL/TCP-1"/>
</dbReference>
<dbReference type="InterPro" id="IPR027409">
    <property type="entry name" value="GroEL-like_apical_dom_sf"/>
</dbReference>
<dbReference type="InterPro" id="IPR027413">
    <property type="entry name" value="GROEL-like_equatorial_sf"/>
</dbReference>
<dbReference type="InterPro" id="IPR027410">
    <property type="entry name" value="TCP-1-like_intermed_sf"/>
</dbReference>
<dbReference type="InterPro" id="IPR053374">
    <property type="entry name" value="TCP-1_chaperonin"/>
</dbReference>
<dbReference type="NCBIfam" id="TIGR02347">
    <property type="entry name" value="chap_CCT_zeta"/>
    <property type="match status" value="1"/>
</dbReference>
<dbReference type="NCBIfam" id="NF041083">
    <property type="entry name" value="thermosome_beta"/>
    <property type="match status" value="1"/>
</dbReference>
<dbReference type="PANTHER" id="PTHR11353">
    <property type="entry name" value="CHAPERONIN"/>
    <property type="match status" value="1"/>
</dbReference>
<dbReference type="Pfam" id="PF00118">
    <property type="entry name" value="Cpn60_TCP1"/>
    <property type="match status" value="1"/>
</dbReference>
<dbReference type="PRINTS" id="PR00304">
    <property type="entry name" value="TCOMPLEXTCP1"/>
</dbReference>
<dbReference type="SUPFAM" id="SSF52029">
    <property type="entry name" value="GroEL apical domain-like"/>
    <property type="match status" value="1"/>
</dbReference>
<dbReference type="SUPFAM" id="SSF48592">
    <property type="entry name" value="GroEL equatorial domain-like"/>
    <property type="match status" value="1"/>
</dbReference>
<dbReference type="SUPFAM" id="SSF54849">
    <property type="entry name" value="GroEL-intermediate domain like"/>
    <property type="match status" value="1"/>
</dbReference>
<dbReference type="PROSITE" id="PS00750">
    <property type="entry name" value="TCP1_1"/>
    <property type="match status" value="1"/>
</dbReference>
<dbReference type="PROSITE" id="PS00751">
    <property type="entry name" value="TCP1_2"/>
    <property type="match status" value="1"/>
</dbReference>
<dbReference type="PROSITE" id="PS00995">
    <property type="entry name" value="TCP1_3"/>
    <property type="match status" value="1"/>
</dbReference>
<evidence type="ECO:0000250" key="1"/>
<evidence type="ECO:0000305" key="2"/>
<accession>O94515</accession>
<name>TCPZ_SCHPO</name>
<comment type="function">
    <text evidence="1">Molecular chaperone; assists the folding of proteins upon ATP hydrolysis. Known to play a role, in vitro, in the folding of actin and tubulin (By similarity).</text>
</comment>
<comment type="subunit">
    <text evidence="1">Heterooligomeric complex of about 850 to 900 kDa that forms two stacked rings, 12 to 16 nm in diameter.</text>
</comment>
<comment type="subcellular location">
    <subcellularLocation>
        <location evidence="1">Cytoplasm</location>
    </subcellularLocation>
</comment>
<comment type="similarity">
    <text evidence="2">Belongs to the TCP-1 chaperonin family.</text>
</comment>
<protein>
    <recommendedName>
        <fullName>T-complex protein 1 subunit zeta</fullName>
        <shortName>TCP-1-zeta</shortName>
    </recommendedName>
    <alternativeName>
        <fullName>CCT-zeta</fullName>
    </alternativeName>
</protein>
<proteinExistence type="inferred from homology"/>
<gene>
    <name type="primary">cct6</name>
    <name type="ORF">SPBC646.11</name>
</gene>